<sequence length="145" mass="15950">MIALIQRVTRASVTVEGEVTGEIGAGLLVLLGVEKDDDEQKANRLCERVLGYRIFSDAEGKMNLNVQQAGGSVLVVSQFTLAADTERGMRPSFSKGASPDRAEALYDYFVERCRQQEMNTQTGRFAADMQVSLVNDGPVTFWLQV</sequence>
<comment type="function">
    <text evidence="1">An aminoacyl-tRNA editing enzyme that deacylates mischarged D-aminoacyl-tRNAs. Also deacylates mischarged glycyl-tRNA(Ala), protecting cells against glycine mischarging by AlaRS. Acts via tRNA-based rather than protein-based catalysis; rejects L-amino acids rather than detecting D-amino acids in the active site. By recycling D-aminoacyl-tRNA to D-amino acids and free tRNA molecules, this enzyme counteracts the toxicity associated with the formation of D-aminoacyl-tRNA entities in vivo and helps enforce protein L-homochirality.</text>
</comment>
<comment type="catalytic activity">
    <reaction evidence="1">
        <text>glycyl-tRNA(Ala) + H2O = tRNA(Ala) + glycine + H(+)</text>
        <dbReference type="Rhea" id="RHEA:53744"/>
        <dbReference type="Rhea" id="RHEA-COMP:9657"/>
        <dbReference type="Rhea" id="RHEA-COMP:13640"/>
        <dbReference type="ChEBI" id="CHEBI:15377"/>
        <dbReference type="ChEBI" id="CHEBI:15378"/>
        <dbReference type="ChEBI" id="CHEBI:57305"/>
        <dbReference type="ChEBI" id="CHEBI:78442"/>
        <dbReference type="ChEBI" id="CHEBI:78522"/>
        <dbReference type="EC" id="3.1.1.96"/>
    </reaction>
</comment>
<comment type="catalytic activity">
    <reaction evidence="1">
        <text>a D-aminoacyl-tRNA + H2O = a tRNA + a D-alpha-amino acid + H(+)</text>
        <dbReference type="Rhea" id="RHEA:13953"/>
        <dbReference type="Rhea" id="RHEA-COMP:10123"/>
        <dbReference type="Rhea" id="RHEA-COMP:10124"/>
        <dbReference type="ChEBI" id="CHEBI:15377"/>
        <dbReference type="ChEBI" id="CHEBI:15378"/>
        <dbReference type="ChEBI" id="CHEBI:59871"/>
        <dbReference type="ChEBI" id="CHEBI:78442"/>
        <dbReference type="ChEBI" id="CHEBI:79333"/>
        <dbReference type="EC" id="3.1.1.96"/>
    </reaction>
</comment>
<comment type="subunit">
    <text evidence="1">Homodimer.</text>
</comment>
<comment type="subcellular location">
    <subcellularLocation>
        <location evidence="1">Cytoplasm</location>
    </subcellularLocation>
</comment>
<comment type="domain">
    <text evidence="1">A Gly-cisPro motif from one monomer fits into the active site of the other monomer to allow specific chiral rejection of L-amino acids.</text>
</comment>
<comment type="similarity">
    <text evidence="1">Belongs to the DTD family.</text>
</comment>
<proteinExistence type="inferred from homology"/>
<evidence type="ECO:0000255" key="1">
    <source>
        <dbReference type="HAMAP-Rule" id="MF_00518"/>
    </source>
</evidence>
<feature type="chain" id="PRO_1000127528" description="D-aminoacyl-tRNA deacylase">
    <location>
        <begin position="1"/>
        <end position="145"/>
    </location>
</feature>
<feature type="short sequence motif" description="Gly-cisPro motif, important for rejection of L-amino acids" evidence="1">
    <location>
        <begin position="137"/>
        <end position="138"/>
    </location>
</feature>
<organism>
    <name type="scientific">Escherichia coli O17:K52:H18 (strain UMN026 / ExPEC)</name>
    <dbReference type="NCBI Taxonomy" id="585056"/>
    <lineage>
        <taxon>Bacteria</taxon>
        <taxon>Pseudomonadati</taxon>
        <taxon>Pseudomonadota</taxon>
        <taxon>Gammaproteobacteria</taxon>
        <taxon>Enterobacterales</taxon>
        <taxon>Enterobacteriaceae</taxon>
        <taxon>Escherichia</taxon>
    </lineage>
</organism>
<reference key="1">
    <citation type="journal article" date="2009" name="PLoS Genet.">
        <title>Organised genome dynamics in the Escherichia coli species results in highly diverse adaptive paths.</title>
        <authorList>
            <person name="Touchon M."/>
            <person name="Hoede C."/>
            <person name="Tenaillon O."/>
            <person name="Barbe V."/>
            <person name="Baeriswyl S."/>
            <person name="Bidet P."/>
            <person name="Bingen E."/>
            <person name="Bonacorsi S."/>
            <person name="Bouchier C."/>
            <person name="Bouvet O."/>
            <person name="Calteau A."/>
            <person name="Chiapello H."/>
            <person name="Clermont O."/>
            <person name="Cruveiller S."/>
            <person name="Danchin A."/>
            <person name="Diard M."/>
            <person name="Dossat C."/>
            <person name="Karoui M.E."/>
            <person name="Frapy E."/>
            <person name="Garry L."/>
            <person name="Ghigo J.M."/>
            <person name="Gilles A.M."/>
            <person name="Johnson J."/>
            <person name="Le Bouguenec C."/>
            <person name="Lescat M."/>
            <person name="Mangenot S."/>
            <person name="Martinez-Jehanne V."/>
            <person name="Matic I."/>
            <person name="Nassif X."/>
            <person name="Oztas S."/>
            <person name="Petit M.A."/>
            <person name="Pichon C."/>
            <person name="Rouy Z."/>
            <person name="Ruf C.S."/>
            <person name="Schneider D."/>
            <person name="Tourret J."/>
            <person name="Vacherie B."/>
            <person name="Vallenet D."/>
            <person name="Medigue C."/>
            <person name="Rocha E.P.C."/>
            <person name="Denamur E."/>
        </authorList>
    </citation>
    <scope>NUCLEOTIDE SEQUENCE [LARGE SCALE GENOMIC DNA]</scope>
    <source>
        <strain>UMN026 / ExPEC</strain>
    </source>
</reference>
<protein>
    <recommendedName>
        <fullName evidence="1">D-aminoacyl-tRNA deacylase</fullName>
        <shortName evidence="1">DTD</shortName>
        <ecNumber evidence="1">3.1.1.96</ecNumber>
    </recommendedName>
    <alternativeName>
        <fullName evidence="1">Gly-tRNA(Ala) deacylase</fullName>
    </alternativeName>
</protein>
<name>DTD_ECOLU</name>
<accession>B7NFI6</accession>
<gene>
    <name evidence="1" type="primary">dtd</name>
    <name type="ordered locus">ECUMN_4414</name>
</gene>
<keyword id="KW-0963">Cytoplasm</keyword>
<keyword id="KW-0378">Hydrolase</keyword>
<keyword id="KW-0694">RNA-binding</keyword>
<keyword id="KW-0820">tRNA-binding</keyword>
<dbReference type="EC" id="3.1.1.96" evidence="1"/>
<dbReference type="EMBL" id="CU928163">
    <property type="protein sequence ID" value="CAR15542.1"/>
    <property type="molecule type" value="Genomic_DNA"/>
</dbReference>
<dbReference type="RefSeq" id="WP_000560983.1">
    <property type="nucleotide sequence ID" value="NC_011751.1"/>
</dbReference>
<dbReference type="RefSeq" id="YP_002415033.1">
    <property type="nucleotide sequence ID" value="NC_011751.1"/>
</dbReference>
<dbReference type="SMR" id="B7NFI6"/>
<dbReference type="STRING" id="585056.ECUMN_4414"/>
<dbReference type="GeneID" id="93778051"/>
<dbReference type="KEGG" id="eum:ECUMN_4414"/>
<dbReference type="PATRIC" id="fig|585056.7.peg.4583"/>
<dbReference type="HOGENOM" id="CLU_076901_1_0_6"/>
<dbReference type="Proteomes" id="UP000007097">
    <property type="component" value="Chromosome"/>
</dbReference>
<dbReference type="GO" id="GO:0005737">
    <property type="term" value="C:cytoplasm"/>
    <property type="evidence" value="ECO:0007669"/>
    <property type="project" value="UniProtKB-SubCell"/>
</dbReference>
<dbReference type="GO" id="GO:0051500">
    <property type="term" value="F:D-tyrosyl-tRNA(Tyr) deacylase activity"/>
    <property type="evidence" value="ECO:0007669"/>
    <property type="project" value="TreeGrafter"/>
</dbReference>
<dbReference type="GO" id="GO:0106026">
    <property type="term" value="F:Gly-tRNA(Ala) deacylase activity"/>
    <property type="evidence" value="ECO:0007669"/>
    <property type="project" value="UniProtKB-UniRule"/>
</dbReference>
<dbReference type="GO" id="GO:0043908">
    <property type="term" value="F:Ser(Gly)-tRNA(Ala) hydrolase activity"/>
    <property type="evidence" value="ECO:0007669"/>
    <property type="project" value="UniProtKB-UniRule"/>
</dbReference>
<dbReference type="GO" id="GO:0000049">
    <property type="term" value="F:tRNA binding"/>
    <property type="evidence" value="ECO:0007669"/>
    <property type="project" value="UniProtKB-UniRule"/>
</dbReference>
<dbReference type="GO" id="GO:0019478">
    <property type="term" value="P:D-amino acid catabolic process"/>
    <property type="evidence" value="ECO:0007669"/>
    <property type="project" value="UniProtKB-UniRule"/>
</dbReference>
<dbReference type="CDD" id="cd00563">
    <property type="entry name" value="Dtyr_deacylase"/>
    <property type="match status" value="1"/>
</dbReference>
<dbReference type="FunFam" id="3.50.80.10:FF:000001">
    <property type="entry name" value="D-aminoacyl-tRNA deacylase"/>
    <property type="match status" value="1"/>
</dbReference>
<dbReference type="Gene3D" id="3.50.80.10">
    <property type="entry name" value="D-tyrosyl-tRNA(Tyr) deacylase"/>
    <property type="match status" value="1"/>
</dbReference>
<dbReference type="HAMAP" id="MF_00518">
    <property type="entry name" value="Deacylase_Dtd"/>
    <property type="match status" value="1"/>
</dbReference>
<dbReference type="InterPro" id="IPR003732">
    <property type="entry name" value="Daa-tRNA_deacyls_DTD"/>
</dbReference>
<dbReference type="InterPro" id="IPR023509">
    <property type="entry name" value="DTD-like_sf"/>
</dbReference>
<dbReference type="NCBIfam" id="TIGR00256">
    <property type="entry name" value="D-aminoacyl-tRNA deacylase"/>
    <property type="match status" value="1"/>
</dbReference>
<dbReference type="PANTHER" id="PTHR10472:SF5">
    <property type="entry name" value="D-AMINOACYL-TRNA DEACYLASE 1"/>
    <property type="match status" value="1"/>
</dbReference>
<dbReference type="PANTHER" id="PTHR10472">
    <property type="entry name" value="D-TYROSYL-TRNA TYR DEACYLASE"/>
    <property type="match status" value="1"/>
</dbReference>
<dbReference type="Pfam" id="PF02580">
    <property type="entry name" value="Tyr_Deacylase"/>
    <property type="match status" value="1"/>
</dbReference>
<dbReference type="SUPFAM" id="SSF69500">
    <property type="entry name" value="DTD-like"/>
    <property type="match status" value="1"/>
</dbReference>